<organismHost>
    <name type="scientific">Acanthamoeba polyphaga</name>
    <name type="common">Amoeba</name>
    <dbReference type="NCBI Taxonomy" id="5757"/>
</organismHost>
<name>YL729_MIMIV</name>
<gene>
    <name type="ordered locus">MIMI_L729</name>
</gene>
<keyword id="KW-1185">Reference proteome</keyword>
<proteinExistence type="predicted"/>
<protein>
    <recommendedName>
        <fullName>Uncharacterized protein L729</fullName>
    </recommendedName>
</protein>
<organism>
    <name type="scientific">Acanthamoeba polyphaga mimivirus</name>
    <name type="common">APMV</name>
    <dbReference type="NCBI Taxonomy" id="212035"/>
    <lineage>
        <taxon>Viruses</taxon>
        <taxon>Varidnaviria</taxon>
        <taxon>Bamfordvirae</taxon>
        <taxon>Nucleocytoviricota</taxon>
        <taxon>Megaviricetes</taxon>
        <taxon>Imitervirales</taxon>
        <taxon>Mimiviridae</taxon>
        <taxon>Megamimivirinae</taxon>
        <taxon>Mimivirus</taxon>
        <taxon>Mimivirus bradfordmassiliense</taxon>
    </lineage>
</organism>
<accession>Q5UNY3</accession>
<dbReference type="EMBL" id="AY653733">
    <property type="protein sequence ID" value="AAV50989.1"/>
    <property type="molecule type" value="Genomic_DNA"/>
</dbReference>
<dbReference type="SMR" id="Q5UNY3"/>
<dbReference type="KEGG" id="vg:9925383"/>
<dbReference type="OrthoDB" id="10244at10239"/>
<dbReference type="Proteomes" id="UP000001134">
    <property type="component" value="Genome"/>
</dbReference>
<reference key="1">
    <citation type="journal article" date="2004" name="Science">
        <title>The 1.2-megabase genome sequence of Mimivirus.</title>
        <authorList>
            <person name="Raoult D."/>
            <person name="Audic S."/>
            <person name="Robert C."/>
            <person name="Abergel C."/>
            <person name="Renesto P."/>
            <person name="Ogata H."/>
            <person name="La Scola B."/>
            <person name="Susan M."/>
            <person name="Claverie J.-M."/>
        </authorList>
    </citation>
    <scope>NUCLEOTIDE SEQUENCE [LARGE SCALE GENOMIC DNA]</scope>
    <source>
        <strain>Rowbotham-Bradford</strain>
    </source>
</reference>
<feature type="chain" id="PRO_0000071337" description="Uncharacterized protein L729">
    <location>
        <begin position="1"/>
        <end position="212"/>
    </location>
</feature>
<sequence length="212" mass="24562">MSEDKNYIIDPLTALCKVALLHFMPDKTKLAINHHVLYIQGYSYYQWLERMKNGDSRVDISNLNMPIIKAVKWYIIDSEDKAELDSETCNNILIITKYTIKGLIKLQQTYCTDNAIKIILQYLINLLRDAIDNNWNDDNCVKIDNHHNILSDKIKKNFESQTISAISKILTDAERMSGSQEDVNALIDCAHKLLINRDTVFVRMMKEVNTHL</sequence>